<protein>
    <recommendedName>
        <fullName evidence="1">DNA-directed RNA polymerase subunit alpha</fullName>
        <shortName evidence="1">RNAP subunit alpha</shortName>
        <ecNumber evidence="1">2.7.7.6</ecNumber>
    </recommendedName>
    <alternativeName>
        <fullName evidence="1">RNA polymerase subunit alpha</fullName>
    </alternativeName>
    <alternativeName>
        <fullName evidence="1">Transcriptase subunit alpha</fullName>
    </alternativeName>
</protein>
<gene>
    <name evidence="1" type="primary">rpoA</name>
    <name type="ordered locus">Sde_0984</name>
</gene>
<comment type="function">
    <text evidence="1">DNA-dependent RNA polymerase catalyzes the transcription of DNA into RNA using the four ribonucleoside triphosphates as substrates.</text>
</comment>
<comment type="catalytic activity">
    <reaction evidence="1">
        <text>RNA(n) + a ribonucleoside 5'-triphosphate = RNA(n+1) + diphosphate</text>
        <dbReference type="Rhea" id="RHEA:21248"/>
        <dbReference type="Rhea" id="RHEA-COMP:14527"/>
        <dbReference type="Rhea" id="RHEA-COMP:17342"/>
        <dbReference type="ChEBI" id="CHEBI:33019"/>
        <dbReference type="ChEBI" id="CHEBI:61557"/>
        <dbReference type="ChEBI" id="CHEBI:140395"/>
        <dbReference type="EC" id="2.7.7.6"/>
    </reaction>
</comment>
<comment type="subunit">
    <text evidence="1">Homodimer. The RNAP catalytic core consists of 2 alpha, 1 beta, 1 beta' and 1 omega subunit. When a sigma factor is associated with the core the holoenzyme is formed, which can initiate transcription.</text>
</comment>
<comment type="domain">
    <text evidence="1">The N-terminal domain is essential for RNAP assembly and basal transcription, whereas the C-terminal domain is involved in interaction with transcriptional regulators and with upstream promoter elements.</text>
</comment>
<comment type="similarity">
    <text evidence="1">Belongs to the RNA polymerase alpha chain family.</text>
</comment>
<feature type="chain" id="PRO_0000264541" description="DNA-directed RNA polymerase subunit alpha">
    <location>
        <begin position="1"/>
        <end position="329"/>
    </location>
</feature>
<feature type="region of interest" description="Alpha N-terminal domain (alpha-NTD)" evidence="1">
    <location>
        <begin position="1"/>
        <end position="234"/>
    </location>
</feature>
<feature type="region of interest" description="Alpha C-terminal domain (alpha-CTD)" evidence="1">
    <location>
        <begin position="248"/>
        <end position="329"/>
    </location>
</feature>
<accession>Q21M33</accession>
<keyword id="KW-0240">DNA-directed RNA polymerase</keyword>
<keyword id="KW-0548">Nucleotidyltransferase</keyword>
<keyword id="KW-1185">Reference proteome</keyword>
<keyword id="KW-0804">Transcription</keyword>
<keyword id="KW-0808">Transferase</keyword>
<dbReference type="EC" id="2.7.7.6" evidence="1"/>
<dbReference type="EMBL" id="CP000282">
    <property type="protein sequence ID" value="ABD80246.1"/>
    <property type="molecule type" value="Genomic_DNA"/>
</dbReference>
<dbReference type="RefSeq" id="WP_011467466.1">
    <property type="nucleotide sequence ID" value="NC_007912.1"/>
</dbReference>
<dbReference type="SMR" id="Q21M33"/>
<dbReference type="STRING" id="203122.Sde_0984"/>
<dbReference type="GeneID" id="98612668"/>
<dbReference type="KEGG" id="sde:Sde_0984"/>
<dbReference type="eggNOG" id="COG0202">
    <property type="taxonomic scope" value="Bacteria"/>
</dbReference>
<dbReference type="HOGENOM" id="CLU_053084_0_0_6"/>
<dbReference type="OrthoDB" id="9805706at2"/>
<dbReference type="Proteomes" id="UP000001947">
    <property type="component" value="Chromosome"/>
</dbReference>
<dbReference type="GO" id="GO:0005737">
    <property type="term" value="C:cytoplasm"/>
    <property type="evidence" value="ECO:0007669"/>
    <property type="project" value="UniProtKB-ARBA"/>
</dbReference>
<dbReference type="GO" id="GO:0000428">
    <property type="term" value="C:DNA-directed RNA polymerase complex"/>
    <property type="evidence" value="ECO:0007669"/>
    <property type="project" value="UniProtKB-KW"/>
</dbReference>
<dbReference type="GO" id="GO:0003677">
    <property type="term" value="F:DNA binding"/>
    <property type="evidence" value="ECO:0007669"/>
    <property type="project" value="UniProtKB-UniRule"/>
</dbReference>
<dbReference type="GO" id="GO:0003899">
    <property type="term" value="F:DNA-directed RNA polymerase activity"/>
    <property type="evidence" value="ECO:0007669"/>
    <property type="project" value="UniProtKB-UniRule"/>
</dbReference>
<dbReference type="GO" id="GO:0046983">
    <property type="term" value="F:protein dimerization activity"/>
    <property type="evidence" value="ECO:0007669"/>
    <property type="project" value="InterPro"/>
</dbReference>
<dbReference type="GO" id="GO:0006351">
    <property type="term" value="P:DNA-templated transcription"/>
    <property type="evidence" value="ECO:0007669"/>
    <property type="project" value="UniProtKB-UniRule"/>
</dbReference>
<dbReference type="CDD" id="cd06928">
    <property type="entry name" value="RNAP_alpha_NTD"/>
    <property type="match status" value="1"/>
</dbReference>
<dbReference type="FunFam" id="1.10.150.20:FF:000001">
    <property type="entry name" value="DNA-directed RNA polymerase subunit alpha"/>
    <property type="match status" value="1"/>
</dbReference>
<dbReference type="FunFam" id="2.170.120.12:FF:000001">
    <property type="entry name" value="DNA-directed RNA polymerase subunit alpha"/>
    <property type="match status" value="1"/>
</dbReference>
<dbReference type="Gene3D" id="1.10.150.20">
    <property type="entry name" value="5' to 3' exonuclease, C-terminal subdomain"/>
    <property type="match status" value="1"/>
</dbReference>
<dbReference type="Gene3D" id="2.170.120.12">
    <property type="entry name" value="DNA-directed RNA polymerase, insert domain"/>
    <property type="match status" value="1"/>
</dbReference>
<dbReference type="Gene3D" id="3.30.1360.10">
    <property type="entry name" value="RNA polymerase, RBP11-like subunit"/>
    <property type="match status" value="1"/>
</dbReference>
<dbReference type="HAMAP" id="MF_00059">
    <property type="entry name" value="RNApol_bact_RpoA"/>
    <property type="match status" value="1"/>
</dbReference>
<dbReference type="InterPro" id="IPR011262">
    <property type="entry name" value="DNA-dir_RNA_pol_insert"/>
</dbReference>
<dbReference type="InterPro" id="IPR011263">
    <property type="entry name" value="DNA-dir_RNA_pol_RpoA/D/Rpb3"/>
</dbReference>
<dbReference type="InterPro" id="IPR011773">
    <property type="entry name" value="DNA-dir_RpoA"/>
</dbReference>
<dbReference type="InterPro" id="IPR036603">
    <property type="entry name" value="RBP11-like"/>
</dbReference>
<dbReference type="InterPro" id="IPR011260">
    <property type="entry name" value="RNAP_asu_C"/>
</dbReference>
<dbReference type="InterPro" id="IPR036643">
    <property type="entry name" value="RNApol_insert_sf"/>
</dbReference>
<dbReference type="NCBIfam" id="NF003513">
    <property type="entry name" value="PRK05182.1-2"/>
    <property type="match status" value="1"/>
</dbReference>
<dbReference type="NCBIfam" id="NF003519">
    <property type="entry name" value="PRK05182.2-5"/>
    <property type="match status" value="1"/>
</dbReference>
<dbReference type="NCBIfam" id="TIGR02027">
    <property type="entry name" value="rpoA"/>
    <property type="match status" value="1"/>
</dbReference>
<dbReference type="Pfam" id="PF01000">
    <property type="entry name" value="RNA_pol_A_bac"/>
    <property type="match status" value="1"/>
</dbReference>
<dbReference type="Pfam" id="PF03118">
    <property type="entry name" value="RNA_pol_A_CTD"/>
    <property type="match status" value="1"/>
</dbReference>
<dbReference type="Pfam" id="PF01193">
    <property type="entry name" value="RNA_pol_L"/>
    <property type="match status" value="1"/>
</dbReference>
<dbReference type="SMART" id="SM00662">
    <property type="entry name" value="RPOLD"/>
    <property type="match status" value="1"/>
</dbReference>
<dbReference type="SUPFAM" id="SSF47789">
    <property type="entry name" value="C-terminal domain of RNA polymerase alpha subunit"/>
    <property type="match status" value="1"/>
</dbReference>
<dbReference type="SUPFAM" id="SSF56553">
    <property type="entry name" value="Insert subdomain of RNA polymerase alpha subunit"/>
    <property type="match status" value="1"/>
</dbReference>
<dbReference type="SUPFAM" id="SSF55257">
    <property type="entry name" value="RBP11-like subunits of RNA polymerase"/>
    <property type="match status" value="1"/>
</dbReference>
<name>RPOA_SACD2</name>
<sequence>MQSAVNEFLTPRHIDVTELGPTRAKVVLEPLERGFGHTLGNALRRILLSSMPGCAVTEVEIDGVQHEYSAIEGVQEDVIEILLNLKNVAVVMHGKDQAVLSLSKQGPGAVTAGDIQVDHDIEIKNPELVIANITSDTSLSMRLTVSRGRGYQPVDARATDEDETRAIGRLQLDASFSPVRRLAYSVESARVEQRTDLDKLVLDLETNGTIDPEEAIRRAATILQQQLAVFVDLEGEKEAEPEQKEDQIDPVLLRPVDDLELTVRSANCLKAENIYYIGDLIQRTEVELLKTPNLGKKSLTEIKDILASRGLSLGMRLENWPPASLKNND</sequence>
<reference key="1">
    <citation type="journal article" date="2008" name="PLoS Genet.">
        <title>Complete genome sequence of the complex carbohydrate-degrading marine bacterium, Saccharophagus degradans strain 2-40 T.</title>
        <authorList>
            <person name="Weiner R.M."/>
            <person name="Taylor L.E. II"/>
            <person name="Henrissat B."/>
            <person name="Hauser L."/>
            <person name="Land M."/>
            <person name="Coutinho P.M."/>
            <person name="Rancurel C."/>
            <person name="Saunders E.H."/>
            <person name="Longmire A.G."/>
            <person name="Zhang H."/>
            <person name="Bayer E.A."/>
            <person name="Gilbert H.J."/>
            <person name="Larimer F."/>
            <person name="Zhulin I.B."/>
            <person name="Ekborg N.A."/>
            <person name="Lamed R."/>
            <person name="Richardson P.M."/>
            <person name="Borovok I."/>
            <person name="Hutcheson S."/>
        </authorList>
    </citation>
    <scope>NUCLEOTIDE SEQUENCE [LARGE SCALE GENOMIC DNA]</scope>
    <source>
        <strain>2-40 / ATCC 43961 / DSM 17024</strain>
    </source>
</reference>
<organism>
    <name type="scientific">Saccharophagus degradans (strain 2-40 / ATCC 43961 / DSM 17024)</name>
    <dbReference type="NCBI Taxonomy" id="203122"/>
    <lineage>
        <taxon>Bacteria</taxon>
        <taxon>Pseudomonadati</taxon>
        <taxon>Pseudomonadota</taxon>
        <taxon>Gammaproteobacteria</taxon>
        <taxon>Cellvibrionales</taxon>
        <taxon>Cellvibrionaceae</taxon>
        <taxon>Saccharophagus</taxon>
    </lineage>
</organism>
<proteinExistence type="inferred from homology"/>
<evidence type="ECO:0000255" key="1">
    <source>
        <dbReference type="HAMAP-Rule" id="MF_00059"/>
    </source>
</evidence>